<accession>B5FM73</accession>
<reference key="1">
    <citation type="journal article" date="2011" name="J. Bacteriol.">
        <title>Comparative genomics of 28 Salmonella enterica isolates: evidence for CRISPR-mediated adaptive sublineage evolution.</title>
        <authorList>
            <person name="Fricke W.F."/>
            <person name="Mammel M.K."/>
            <person name="McDermott P.F."/>
            <person name="Tartera C."/>
            <person name="White D.G."/>
            <person name="Leclerc J.E."/>
            <person name="Ravel J."/>
            <person name="Cebula T.A."/>
        </authorList>
    </citation>
    <scope>NUCLEOTIDE SEQUENCE [LARGE SCALE GENOMIC DNA]</scope>
    <source>
        <strain>CT_02021853</strain>
    </source>
</reference>
<dbReference type="EC" id="2.7.7.6" evidence="1"/>
<dbReference type="EMBL" id="CP001144">
    <property type="protein sequence ID" value="ACH76968.1"/>
    <property type="molecule type" value="Genomic_DNA"/>
</dbReference>
<dbReference type="RefSeq" id="WP_000135058.1">
    <property type="nucleotide sequence ID" value="NC_011205.1"/>
</dbReference>
<dbReference type="SMR" id="B5FM73"/>
<dbReference type="GeneID" id="98390719"/>
<dbReference type="KEGG" id="sed:SeD_A4128"/>
<dbReference type="HOGENOM" id="CLU_125406_5_3_6"/>
<dbReference type="Proteomes" id="UP000008322">
    <property type="component" value="Chromosome"/>
</dbReference>
<dbReference type="GO" id="GO:0000428">
    <property type="term" value="C:DNA-directed RNA polymerase complex"/>
    <property type="evidence" value="ECO:0007669"/>
    <property type="project" value="UniProtKB-KW"/>
</dbReference>
<dbReference type="GO" id="GO:0003677">
    <property type="term" value="F:DNA binding"/>
    <property type="evidence" value="ECO:0007669"/>
    <property type="project" value="UniProtKB-UniRule"/>
</dbReference>
<dbReference type="GO" id="GO:0003899">
    <property type="term" value="F:DNA-directed RNA polymerase activity"/>
    <property type="evidence" value="ECO:0007669"/>
    <property type="project" value="UniProtKB-UniRule"/>
</dbReference>
<dbReference type="GO" id="GO:0006351">
    <property type="term" value="P:DNA-templated transcription"/>
    <property type="evidence" value="ECO:0007669"/>
    <property type="project" value="UniProtKB-UniRule"/>
</dbReference>
<dbReference type="FunFam" id="3.90.940.10:FF:000001">
    <property type="entry name" value="DNA-directed RNA polymerase subunit omega"/>
    <property type="match status" value="1"/>
</dbReference>
<dbReference type="Gene3D" id="3.90.940.10">
    <property type="match status" value="1"/>
</dbReference>
<dbReference type="HAMAP" id="MF_00366">
    <property type="entry name" value="RNApol_bact_RpoZ"/>
    <property type="match status" value="1"/>
</dbReference>
<dbReference type="InterPro" id="IPR003716">
    <property type="entry name" value="DNA-dir_RNA_pol_omega"/>
</dbReference>
<dbReference type="InterPro" id="IPR006110">
    <property type="entry name" value="Pol_omega/Rpo6/RPB6"/>
</dbReference>
<dbReference type="InterPro" id="IPR036161">
    <property type="entry name" value="RPB6/omega-like_sf"/>
</dbReference>
<dbReference type="NCBIfam" id="TIGR00690">
    <property type="entry name" value="rpoZ"/>
    <property type="match status" value="1"/>
</dbReference>
<dbReference type="PANTHER" id="PTHR34476">
    <property type="entry name" value="DNA-DIRECTED RNA POLYMERASE SUBUNIT OMEGA"/>
    <property type="match status" value="1"/>
</dbReference>
<dbReference type="PANTHER" id="PTHR34476:SF1">
    <property type="entry name" value="DNA-DIRECTED RNA POLYMERASE SUBUNIT OMEGA"/>
    <property type="match status" value="1"/>
</dbReference>
<dbReference type="Pfam" id="PF01192">
    <property type="entry name" value="RNA_pol_Rpb6"/>
    <property type="match status" value="1"/>
</dbReference>
<dbReference type="SMART" id="SM01409">
    <property type="entry name" value="RNA_pol_Rpb6"/>
    <property type="match status" value="1"/>
</dbReference>
<dbReference type="SUPFAM" id="SSF63562">
    <property type="entry name" value="RPB6/omega subunit-like"/>
    <property type="match status" value="1"/>
</dbReference>
<protein>
    <recommendedName>
        <fullName evidence="1">DNA-directed RNA polymerase subunit omega</fullName>
        <shortName evidence="1">RNAP omega subunit</shortName>
        <ecNumber evidence="1">2.7.7.6</ecNumber>
    </recommendedName>
    <alternativeName>
        <fullName evidence="1">RNA polymerase omega subunit</fullName>
    </alternativeName>
    <alternativeName>
        <fullName evidence="1">Transcriptase subunit omega</fullName>
    </alternativeName>
</protein>
<sequence>MARVTVQDAVEKIGNRFDLVLVAARRARQMQVGGKDPLVPEENDKTTVIALREIEEGLINNQILDVRERQEQQEQEAAELQAVTAIAEGRR</sequence>
<feature type="chain" id="PRO_1000121265" description="DNA-directed RNA polymerase subunit omega">
    <location>
        <begin position="1"/>
        <end position="91"/>
    </location>
</feature>
<proteinExistence type="inferred from homology"/>
<organism>
    <name type="scientific">Salmonella dublin (strain CT_02021853)</name>
    <dbReference type="NCBI Taxonomy" id="439851"/>
    <lineage>
        <taxon>Bacteria</taxon>
        <taxon>Pseudomonadati</taxon>
        <taxon>Pseudomonadota</taxon>
        <taxon>Gammaproteobacteria</taxon>
        <taxon>Enterobacterales</taxon>
        <taxon>Enterobacteriaceae</taxon>
        <taxon>Salmonella</taxon>
    </lineage>
</organism>
<evidence type="ECO:0000255" key="1">
    <source>
        <dbReference type="HAMAP-Rule" id="MF_00366"/>
    </source>
</evidence>
<comment type="function">
    <text evidence="1">Promotes RNA polymerase assembly. Latches the N- and C-terminal regions of the beta' subunit thereby facilitating its interaction with the beta and alpha subunits.</text>
</comment>
<comment type="catalytic activity">
    <reaction evidence="1">
        <text>RNA(n) + a ribonucleoside 5'-triphosphate = RNA(n+1) + diphosphate</text>
        <dbReference type="Rhea" id="RHEA:21248"/>
        <dbReference type="Rhea" id="RHEA-COMP:14527"/>
        <dbReference type="Rhea" id="RHEA-COMP:17342"/>
        <dbReference type="ChEBI" id="CHEBI:33019"/>
        <dbReference type="ChEBI" id="CHEBI:61557"/>
        <dbReference type="ChEBI" id="CHEBI:140395"/>
        <dbReference type="EC" id="2.7.7.6"/>
    </reaction>
</comment>
<comment type="subunit">
    <text evidence="1">The RNAP catalytic core consists of 2 alpha, 1 beta, 1 beta' and 1 omega subunit. When a sigma factor is associated with the core the holoenzyme is formed, which can initiate transcription.</text>
</comment>
<comment type="similarity">
    <text evidence="1">Belongs to the RNA polymerase subunit omega family.</text>
</comment>
<keyword id="KW-0240">DNA-directed RNA polymerase</keyword>
<keyword id="KW-0548">Nucleotidyltransferase</keyword>
<keyword id="KW-0804">Transcription</keyword>
<keyword id="KW-0808">Transferase</keyword>
<name>RPOZ_SALDC</name>
<gene>
    <name evidence="1" type="primary">rpoZ</name>
    <name type="ordered locus">SeD_A4128</name>
</gene>